<name>RL32_STAA3</name>
<reference key="1">
    <citation type="journal article" date="2006" name="Lancet">
        <title>Complete genome sequence of USA300, an epidemic clone of community-acquired meticillin-resistant Staphylococcus aureus.</title>
        <authorList>
            <person name="Diep B.A."/>
            <person name="Gill S.R."/>
            <person name="Chang R.F."/>
            <person name="Phan T.H."/>
            <person name="Chen J.H."/>
            <person name="Davidson M.G."/>
            <person name="Lin F."/>
            <person name="Lin J."/>
            <person name="Carleton H.A."/>
            <person name="Mongodin E.F."/>
            <person name="Sensabaugh G.F."/>
            <person name="Perdreau-Remington F."/>
        </authorList>
    </citation>
    <scope>NUCLEOTIDE SEQUENCE [LARGE SCALE GENOMIC DNA]</scope>
    <source>
        <strain>USA300</strain>
    </source>
</reference>
<accession>Q2FHV3</accession>
<comment type="similarity">
    <text evidence="1">Belongs to the bacterial ribosomal protein bL32 family.</text>
</comment>
<sequence>MAVPKRRTSKTRKNKRRTHFKISVPGMTECPNCGEYKLSHRVCKNCGSYNGEEVAAK</sequence>
<evidence type="ECO:0000255" key="1">
    <source>
        <dbReference type="HAMAP-Rule" id="MF_00340"/>
    </source>
</evidence>
<evidence type="ECO:0000305" key="2"/>
<dbReference type="EMBL" id="CP000255">
    <property type="protein sequence ID" value="ABD22440.1"/>
    <property type="molecule type" value="Genomic_DNA"/>
</dbReference>
<dbReference type="RefSeq" id="WP_000290472.1">
    <property type="nucleotide sequence ID" value="NZ_CP027476.1"/>
</dbReference>
<dbReference type="SMR" id="Q2FHV3"/>
<dbReference type="GeneID" id="98345444"/>
<dbReference type="KEGG" id="saa:SAUSA300_1027"/>
<dbReference type="HOGENOM" id="CLU_129084_1_3_9"/>
<dbReference type="Proteomes" id="UP000001939">
    <property type="component" value="Chromosome"/>
</dbReference>
<dbReference type="GO" id="GO:0015934">
    <property type="term" value="C:large ribosomal subunit"/>
    <property type="evidence" value="ECO:0007669"/>
    <property type="project" value="InterPro"/>
</dbReference>
<dbReference type="GO" id="GO:0003735">
    <property type="term" value="F:structural constituent of ribosome"/>
    <property type="evidence" value="ECO:0007669"/>
    <property type="project" value="InterPro"/>
</dbReference>
<dbReference type="GO" id="GO:0006412">
    <property type="term" value="P:translation"/>
    <property type="evidence" value="ECO:0007669"/>
    <property type="project" value="UniProtKB-UniRule"/>
</dbReference>
<dbReference type="Gene3D" id="1.20.5.640">
    <property type="entry name" value="Single helix bin"/>
    <property type="match status" value="1"/>
</dbReference>
<dbReference type="HAMAP" id="MF_00340">
    <property type="entry name" value="Ribosomal_bL32"/>
    <property type="match status" value="1"/>
</dbReference>
<dbReference type="InterPro" id="IPR002677">
    <property type="entry name" value="Ribosomal_bL32"/>
</dbReference>
<dbReference type="InterPro" id="IPR044957">
    <property type="entry name" value="Ribosomal_bL32_bact"/>
</dbReference>
<dbReference type="InterPro" id="IPR011332">
    <property type="entry name" value="Ribosomal_zn-bd"/>
</dbReference>
<dbReference type="NCBIfam" id="TIGR01031">
    <property type="entry name" value="rpmF_bact"/>
    <property type="match status" value="1"/>
</dbReference>
<dbReference type="PANTHER" id="PTHR35534">
    <property type="entry name" value="50S RIBOSOMAL PROTEIN L32"/>
    <property type="match status" value="1"/>
</dbReference>
<dbReference type="PANTHER" id="PTHR35534:SF2">
    <property type="entry name" value="LARGE RIBOSOMAL SUBUNIT PROTEIN BL32"/>
    <property type="match status" value="1"/>
</dbReference>
<dbReference type="Pfam" id="PF01783">
    <property type="entry name" value="Ribosomal_L32p"/>
    <property type="match status" value="1"/>
</dbReference>
<dbReference type="SUPFAM" id="SSF57829">
    <property type="entry name" value="Zn-binding ribosomal proteins"/>
    <property type="match status" value="1"/>
</dbReference>
<gene>
    <name evidence="1" type="primary">rpmF</name>
    <name type="ordered locus">SAUSA300_1027</name>
</gene>
<proteinExistence type="inferred from homology"/>
<protein>
    <recommendedName>
        <fullName evidence="1">Large ribosomal subunit protein bL32</fullName>
    </recommendedName>
    <alternativeName>
        <fullName evidence="2">50S ribosomal protein L32</fullName>
    </alternativeName>
</protein>
<organism>
    <name type="scientific">Staphylococcus aureus (strain USA300)</name>
    <dbReference type="NCBI Taxonomy" id="367830"/>
    <lineage>
        <taxon>Bacteria</taxon>
        <taxon>Bacillati</taxon>
        <taxon>Bacillota</taxon>
        <taxon>Bacilli</taxon>
        <taxon>Bacillales</taxon>
        <taxon>Staphylococcaceae</taxon>
        <taxon>Staphylococcus</taxon>
    </lineage>
</organism>
<keyword id="KW-0687">Ribonucleoprotein</keyword>
<keyword id="KW-0689">Ribosomal protein</keyword>
<feature type="chain" id="PRO_0000296572" description="Large ribosomal subunit protein bL32">
    <location>
        <begin position="1"/>
        <end position="57"/>
    </location>
</feature>